<proteinExistence type="inferred from homology"/>
<organism>
    <name type="scientific">Streptococcus pyogenes serotype M3 (strain SSI-1)</name>
    <dbReference type="NCBI Taxonomy" id="193567"/>
    <lineage>
        <taxon>Bacteria</taxon>
        <taxon>Bacillati</taxon>
        <taxon>Bacillota</taxon>
        <taxon>Bacilli</taxon>
        <taxon>Lactobacillales</taxon>
        <taxon>Streptococcaceae</taxon>
        <taxon>Streptococcus</taxon>
    </lineage>
</organism>
<accession>P0CZ61</accession>
<accession>Q8K617</accession>
<keyword id="KW-0067">ATP-binding</keyword>
<keyword id="KW-0436">Ligase</keyword>
<keyword id="KW-0547">Nucleotide-binding</keyword>
<keyword id="KW-0648">Protein biosynthesis</keyword>
<name>GATA_STRPQ</name>
<dbReference type="EC" id="6.3.5.7" evidence="1"/>
<dbReference type="EMBL" id="BA000034">
    <property type="protein sequence ID" value="BAC63421.1"/>
    <property type="molecule type" value="Genomic_DNA"/>
</dbReference>
<dbReference type="RefSeq" id="WP_011054946.1">
    <property type="nucleotide sequence ID" value="NC_004606.1"/>
</dbReference>
<dbReference type="SMR" id="P0CZ61"/>
<dbReference type="KEGG" id="sps:SPs0326"/>
<dbReference type="HOGENOM" id="CLU_009600_0_3_9"/>
<dbReference type="GO" id="GO:0030956">
    <property type="term" value="C:glutamyl-tRNA(Gln) amidotransferase complex"/>
    <property type="evidence" value="ECO:0007669"/>
    <property type="project" value="InterPro"/>
</dbReference>
<dbReference type="GO" id="GO:0005524">
    <property type="term" value="F:ATP binding"/>
    <property type="evidence" value="ECO:0007669"/>
    <property type="project" value="UniProtKB-KW"/>
</dbReference>
<dbReference type="GO" id="GO:0050567">
    <property type="term" value="F:glutaminyl-tRNA synthase (glutamine-hydrolyzing) activity"/>
    <property type="evidence" value="ECO:0007669"/>
    <property type="project" value="UniProtKB-UniRule"/>
</dbReference>
<dbReference type="GO" id="GO:0006412">
    <property type="term" value="P:translation"/>
    <property type="evidence" value="ECO:0007669"/>
    <property type="project" value="UniProtKB-UniRule"/>
</dbReference>
<dbReference type="Gene3D" id="3.90.1300.10">
    <property type="entry name" value="Amidase signature (AS) domain"/>
    <property type="match status" value="1"/>
</dbReference>
<dbReference type="HAMAP" id="MF_00120">
    <property type="entry name" value="GatA"/>
    <property type="match status" value="1"/>
</dbReference>
<dbReference type="InterPro" id="IPR000120">
    <property type="entry name" value="Amidase"/>
</dbReference>
<dbReference type="InterPro" id="IPR020556">
    <property type="entry name" value="Amidase_CS"/>
</dbReference>
<dbReference type="InterPro" id="IPR023631">
    <property type="entry name" value="Amidase_dom"/>
</dbReference>
<dbReference type="InterPro" id="IPR036928">
    <property type="entry name" value="AS_sf"/>
</dbReference>
<dbReference type="InterPro" id="IPR004412">
    <property type="entry name" value="GatA"/>
</dbReference>
<dbReference type="NCBIfam" id="TIGR00132">
    <property type="entry name" value="gatA"/>
    <property type="match status" value="1"/>
</dbReference>
<dbReference type="PANTHER" id="PTHR11895:SF151">
    <property type="entry name" value="GLUTAMYL-TRNA(GLN) AMIDOTRANSFERASE SUBUNIT A"/>
    <property type="match status" value="1"/>
</dbReference>
<dbReference type="PANTHER" id="PTHR11895">
    <property type="entry name" value="TRANSAMIDASE"/>
    <property type="match status" value="1"/>
</dbReference>
<dbReference type="Pfam" id="PF01425">
    <property type="entry name" value="Amidase"/>
    <property type="match status" value="1"/>
</dbReference>
<dbReference type="SUPFAM" id="SSF75304">
    <property type="entry name" value="Amidase signature (AS) enzymes"/>
    <property type="match status" value="1"/>
</dbReference>
<dbReference type="PROSITE" id="PS00571">
    <property type="entry name" value="AMIDASES"/>
    <property type="match status" value="1"/>
</dbReference>
<sequence length="488" mass="52237">MSFNHKTIEELHDLLVAKEISATELTQKTLEDIKSREEAVGSFITVSEEAALKQAAAIDAKGIDSDNLMSGIPLAVKDNISTKGILTTAASKMLYNYEPIFDATSVANAYAKDMIVIGKTNMDEFAMGGSTETSYFKKTKNAWDHTKVPGGSSGGSATAVASGQVRLSLGSDTGGSIRQPAAFNGVVGLKPTYGTVSRYGLIAFGSSLDQIGPFAPTVKENAQLLNVVASSDVKDATSAPVRIADYTSKIGRDIKGMKIALPKEYLGEGIDPEIKETVLAAAKQFEALGATVEEVSLPHSKYGVAVYYIIASSEASSNLQRFDGIRYGFRADDAKNLDEIYVNTRSQGFGDEVKRRIMLGTFSLSSGYYDAYFKKAGQVRTLIIEDFDKVFADYDLILGPTTPTVAFGLDTLNHDPVAMYLADLLTIPVNLAGLPGISIPAGFVDGLPVGLQLIGPKYTEETIYQAAAAFEAVTDYHKQQPIIFGGDK</sequence>
<protein>
    <recommendedName>
        <fullName evidence="1">Glutamyl-tRNA(Gln) amidotransferase subunit A</fullName>
        <shortName evidence="1">Glu-ADT subunit A</shortName>
        <ecNumber evidence="1">6.3.5.7</ecNumber>
    </recommendedName>
</protein>
<evidence type="ECO:0000255" key="1">
    <source>
        <dbReference type="HAMAP-Rule" id="MF_00120"/>
    </source>
</evidence>
<comment type="function">
    <text evidence="1">Allows the formation of correctly charged Gln-tRNA(Gln) through the transamidation of misacylated Glu-tRNA(Gln) in organisms which lack glutaminyl-tRNA synthetase. The reaction takes place in the presence of glutamine and ATP through an activated gamma-phospho-Glu-tRNA(Gln).</text>
</comment>
<comment type="catalytic activity">
    <reaction evidence="1">
        <text>L-glutamyl-tRNA(Gln) + L-glutamine + ATP + H2O = L-glutaminyl-tRNA(Gln) + L-glutamate + ADP + phosphate + H(+)</text>
        <dbReference type="Rhea" id="RHEA:17521"/>
        <dbReference type="Rhea" id="RHEA-COMP:9681"/>
        <dbReference type="Rhea" id="RHEA-COMP:9684"/>
        <dbReference type="ChEBI" id="CHEBI:15377"/>
        <dbReference type="ChEBI" id="CHEBI:15378"/>
        <dbReference type="ChEBI" id="CHEBI:29985"/>
        <dbReference type="ChEBI" id="CHEBI:30616"/>
        <dbReference type="ChEBI" id="CHEBI:43474"/>
        <dbReference type="ChEBI" id="CHEBI:58359"/>
        <dbReference type="ChEBI" id="CHEBI:78520"/>
        <dbReference type="ChEBI" id="CHEBI:78521"/>
        <dbReference type="ChEBI" id="CHEBI:456216"/>
        <dbReference type="EC" id="6.3.5.7"/>
    </reaction>
</comment>
<comment type="subunit">
    <text evidence="1">Heterotrimer of A, B and C subunits.</text>
</comment>
<comment type="similarity">
    <text evidence="1">Belongs to the amidase family. GatA subfamily.</text>
</comment>
<reference key="1">
    <citation type="journal article" date="2003" name="Genome Res.">
        <title>Genome sequence of an M3 strain of Streptococcus pyogenes reveals a large-scale genomic rearrangement in invasive strains and new insights into phage evolution.</title>
        <authorList>
            <person name="Nakagawa I."/>
            <person name="Kurokawa K."/>
            <person name="Yamashita A."/>
            <person name="Nakata M."/>
            <person name="Tomiyasu Y."/>
            <person name="Okahashi N."/>
            <person name="Kawabata S."/>
            <person name="Yamazaki K."/>
            <person name="Shiba T."/>
            <person name="Yasunaga T."/>
            <person name="Hayashi H."/>
            <person name="Hattori M."/>
            <person name="Hamada S."/>
        </authorList>
    </citation>
    <scope>NUCLEOTIDE SEQUENCE [LARGE SCALE GENOMIC DNA]</scope>
    <source>
        <strain>SSI-1</strain>
    </source>
</reference>
<feature type="chain" id="PRO_0000411268" description="Glutamyl-tRNA(Gln) amidotransferase subunit A">
    <location>
        <begin position="1"/>
        <end position="488"/>
    </location>
</feature>
<feature type="active site" description="Charge relay system" evidence="1">
    <location>
        <position position="77"/>
    </location>
</feature>
<feature type="active site" description="Charge relay system" evidence="1">
    <location>
        <position position="152"/>
    </location>
</feature>
<feature type="active site" description="Acyl-ester intermediate" evidence="1">
    <location>
        <position position="176"/>
    </location>
</feature>
<gene>
    <name evidence="1" type="primary">gatA</name>
    <name type="ordered locus">SPs0326</name>
</gene>